<proteinExistence type="inferred from homology"/>
<dbReference type="EC" id="1.1.1.262" evidence="1"/>
<dbReference type="EMBL" id="BA000039">
    <property type="protein sequence ID" value="BAC09597.1"/>
    <property type="molecule type" value="Genomic_DNA"/>
</dbReference>
<dbReference type="RefSeq" id="NP_682835.1">
    <property type="nucleotide sequence ID" value="NC_004113.1"/>
</dbReference>
<dbReference type="RefSeq" id="WP_011057880.1">
    <property type="nucleotide sequence ID" value="NC_004113.1"/>
</dbReference>
<dbReference type="SMR" id="Q8DHB4"/>
<dbReference type="STRING" id="197221.gene:10748654"/>
<dbReference type="EnsemblBacteria" id="BAC09597">
    <property type="protein sequence ID" value="BAC09597"/>
    <property type="gene ID" value="BAC09597"/>
</dbReference>
<dbReference type="KEGG" id="tel:tll2045"/>
<dbReference type="PATRIC" id="fig|197221.4.peg.2140"/>
<dbReference type="eggNOG" id="COG1995">
    <property type="taxonomic scope" value="Bacteria"/>
</dbReference>
<dbReference type="UniPathway" id="UPA00244">
    <property type="reaction ID" value="UER00312"/>
</dbReference>
<dbReference type="Proteomes" id="UP000000440">
    <property type="component" value="Chromosome"/>
</dbReference>
<dbReference type="GO" id="GO:0005737">
    <property type="term" value="C:cytoplasm"/>
    <property type="evidence" value="ECO:0007669"/>
    <property type="project" value="UniProtKB-SubCell"/>
</dbReference>
<dbReference type="GO" id="GO:0050570">
    <property type="term" value="F:4-hydroxythreonine-4-phosphate dehydrogenase activity"/>
    <property type="evidence" value="ECO:0007669"/>
    <property type="project" value="UniProtKB-UniRule"/>
</dbReference>
<dbReference type="GO" id="GO:0046872">
    <property type="term" value="F:metal ion binding"/>
    <property type="evidence" value="ECO:0007669"/>
    <property type="project" value="UniProtKB-UniRule"/>
</dbReference>
<dbReference type="GO" id="GO:0051287">
    <property type="term" value="F:NAD binding"/>
    <property type="evidence" value="ECO:0007669"/>
    <property type="project" value="InterPro"/>
</dbReference>
<dbReference type="GO" id="GO:0042823">
    <property type="term" value="P:pyridoxal phosphate biosynthetic process"/>
    <property type="evidence" value="ECO:0007669"/>
    <property type="project" value="UniProtKB-UniRule"/>
</dbReference>
<dbReference type="GO" id="GO:0008615">
    <property type="term" value="P:pyridoxine biosynthetic process"/>
    <property type="evidence" value="ECO:0007669"/>
    <property type="project" value="UniProtKB-UniRule"/>
</dbReference>
<dbReference type="Gene3D" id="3.40.718.10">
    <property type="entry name" value="Isopropylmalate Dehydrogenase"/>
    <property type="match status" value="1"/>
</dbReference>
<dbReference type="HAMAP" id="MF_00536">
    <property type="entry name" value="PdxA"/>
    <property type="match status" value="1"/>
</dbReference>
<dbReference type="InterPro" id="IPR037510">
    <property type="entry name" value="PdxA"/>
</dbReference>
<dbReference type="InterPro" id="IPR005255">
    <property type="entry name" value="PdxA_fam"/>
</dbReference>
<dbReference type="NCBIfam" id="TIGR00557">
    <property type="entry name" value="pdxA"/>
    <property type="match status" value="1"/>
</dbReference>
<dbReference type="NCBIfam" id="NF002744">
    <property type="entry name" value="PRK02746.1"/>
    <property type="match status" value="1"/>
</dbReference>
<dbReference type="PANTHER" id="PTHR30004">
    <property type="entry name" value="4-HYDROXYTHREONINE-4-PHOSPHATE DEHYDROGENASE"/>
    <property type="match status" value="1"/>
</dbReference>
<dbReference type="PANTHER" id="PTHR30004:SF6">
    <property type="entry name" value="D-THREONATE 4-PHOSPHATE DEHYDROGENASE"/>
    <property type="match status" value="1"/>
</dbReference>
<dbReference type="Pfam" id="PF04166">
    <property type="entry name" value="PdxA"/>
    <property type="match status" value="1"/>
</dbReference>
<dbReference type="SUPFAM" id="SSF53659">
    <property type="entry name" value="Isocitrate/Isopropylmalate dehydrogenase-like"/>
    <property type="match status" value="1"/>
</dbReference>
<feature type="chain" id="PRO_0000188831" description="4-hydroxythreonine-4-phosphate dehydrogenase">
    <location>
        <begin position="1"/>
        <end position="341"/>
    </location>
</feature>
<feature type="binding site" evidence="1">
    <location>
        <position position="126"/>
    </location>
    <ligand>
        <name>substrate</name>
    </ligand>
</feature>
<feature type="binding site" evidence="1">
    <location>
        <position position="161"/>
    </location>
    <ligand>
        <name>a divalent metal cation</name>
        <dbReference type="ChEBI" id="CHEBI:60240"/>
        <note>ligand shared between dimeric partners</note>
    </ligand>
</feature>
<feature type="binding site" evidence="1">
    <location>
        <position position="206"/>
    </location>
    <ligand>
        <name>a divalent metal cation</name>
        <dbReference type="ChEBI" id="CHEBI:60240"/>
        <note>ligand shared between dimeric partners</note>
    </ligand>
</feature>
<feature type="binding site" evidence="1">
    <location>
        <position position="272"/>
    </location>
    <ligand>
        <name>a divalent metal cation</name>
        <dbReference type="ChEBI" id="CHEBI:60240"/>
        <note>ligand shared between dimeric partners</note>
    </ligand>
</feature>
<feature type="binding site" evidence="1">
    <location>
        <position position="280"/>
    </location>
    <ligand>
        <name>substrate</name>
    </ligand>
</feature>
<feature type="binding site" evidence="1">
    <location>
        <position position="289"/>
    </location>
    <ligand>
        <name>substrate</name>
    </ligand>
</feature>
<feature type="binding site" evidence="1">
    <location>
        <position position="298"/>
    </location>
    <ligand>
        <name>substrate</name>
    </ligand>
</feature>
<accession>Q8DHB4</accession>
<keyword id="KW-0963">Cytoplasm</keyword>
<keyword id="KW-0479">Metal-binding</keyword>
<keyword id="KW-0520">NAD</keyword>
<keyword id="KW-0521">NADP</keyword>
<keyword id="KW-0560">Oxidoreductase</keyword>
<keyword id="KW-0664">Pyridoxine biosynthesis</keyword>
<keyword id="KW-1185">Reference proteome</keyword>
<reference key="1">
    <citation type="journal article" date="2002" name="DNA Res.">
        <title>Complete genome structure of the thermophilic cyanobacterium Thermosynechococcus elongatus BP-1.</title>
        <authorList>
            <person name="Nakamura Y."/>
            <person name="Kaneko T."/>
            <person name="Sato S."/>
            <person name="Ikeuchi M."/>
            <person name="Katoh H."/>
            <person name="Sasamoto S."/>
            <person name="Watanabe A."/>
            <person name="Iriguchi M."/>
            <person name="Kawashima K."/>
            <person name="Kimura T."/>
            <person name="Kishida Y."/>
            <person name="Kiyokawa C."/>
            <person name="Kohara M."/>
            <person name="Matsumoto M."/>
            <person name="Matsuno A."/>
            <person name="Nakazaki N."/>
            <person name="Shimpo S."/>
            <person name="Sugimoto M."/>
            <person name="Takeuchi C."/>
            <person name="Yamada M."/>
            <person name="Tabata S."/>
        </authorList>
    </citation>
    <scope>NUCLEOTIDE SEQUENCE [LARGE SCALE GENOMIC DNA]</scope>
    <source>
        <strain>NIES-2133 / IAM M-273 / BP-1</strain>
    </source>
</reference>
<protein>
    <recommendedName>
        <fullName evidence="1">4-hydroxythreonine-4-phosphate dehydrogenase</fullName>
        <ecNumber evidence="1">1.1.1.262</ecNumber>
    </recommendedName>
    <alternativeName>
        <fullName evidence="1">4-(phosphohydroxy)-L-threonine dehydrogenase</fullName>
    </alternativeName>
</protein>
<comment type="function">
    <text evidence="1">Catalyzes the NAD(P)-dependent oxidation of 4-(phosphooxy)-L-threonine (HTP) into 2-amino-3-oxo-4-(phosphooxy)butyric acid which spontaneously decarboxylates to form 3-amino-2-oxopropyl phosphate (AHAP).</text>
</comment>
<comment type="catalytic activity">
    <reaction evidence="1">
        <text>4-(phosphooxy)-L-threonine + NAD(+) = 3-amino-2-oxopropyl phosphate + CO2 + NADH</text>
        <dbReference type="Rhea" id="RHEA:32275"/>
        <dbReference type="ChEBI" id="CHEBI:16526"/>
        <dbReference type="ChEBI" id="CHEBI:57279"/>
        <dbReference type="ChEBI" id="CHEBI:57540"/>
        <dbReference type="ChEBI" id="CHEBI:57945"/>
        <dbReference type="ChEBI" id="CHEBI:58452"/>
        <dbReference type="EC" id="1.1.1.262"/>
    </reaction>
</comment>
<comment type="cofactor">
    <cofactor evidence="1">
        <name>a divalent metal cation</name>
        <dbReference type="ChEBI" id="CHEBI:60240"/>
    </cofactor>
    <text evidence="1">Binds 1 divalent metal cation per subunit.</text>
</comment>
<comment type="pathway">
    <text evidence="1">Cofactor biosynthesis; pyridoxine 5'-phosphate biosynthesis; pyridoxine 5'-phosphate from D-erythrose 4-phosphate: step 4/5.</text>
</comment>
<comment type="subunit">
    <text evidence="1">Homodimer.</text>
</comment>
<comment type="subcellular location">
    <subcellularLocation>
        <location evidence="1">Cytoplasm</location>
    </subcellularLocation>
</comment>
<comment type="miscellaneous">
    <text evidence="1">The active site is located at the dimer interface.</text>
</comment>
<comment type="similarity">
    <text evidence="1">Belongs to the PdxA family.</text>
</comment>
<sequence>MSLALTLGDPAGIGPEILLKALAHLPSELLGQFFIAGTGQVLEETYARLCQQGQVAIDPAQLQLWEHPLDEVIVPGRPSVASGTASFAYLKTAIQRAIAGEVAGIVTAPISKACWQAAGYSFPGQTEVLAHLTGTAHVGMLFLGRSPVTHWVLTTLLATTHIPLQAVPRALTPEGLNEKLALLIQFLRERRHLERPRIAIAGLNPHSGEQGHLGQEEVTWLIPWLAAAQQQYPEVELIGPVPPDTLWIGAADAWWGRPAPATAYDAYLALYHDQGLIPVKMLAFREAVNTTIGLPFIRTSPDHGTAFDIAGTGVADPQSFLAAIAWAQTLSKGSVFPLTLA</sequence>
<name>PDXA_THEVB</name>
<organism>
    <name type="scientific">Thermosynechococcus vestitus (strain NIES-2133 / IAM M-273 / BP-1)</name>
    <dbReference type="NCBI Taxonomy" id="197221"/>
    <lineage>
        <taxon>Bacteria</taxon>
        <taxon>Bacillati</taxon>
        <taxon>Cyanobacteriota</taxon>
        <taxon>Cyanophyceae</taxon>
        <taxon>Acaryochloridales</taxon>
        <taxon>Thermosynechococcaceae</taxon>
        <taxon>Thermosynechococcus</taxon>
    </lineage>
</organism>
<gene>
    <name evidence="1" type="primary">pdxA</name>
    <name type="ordered locus">tll2045</name>
</gene>
<evidence type="ECO:0000255" key="1">
    <source>
        <dbReference type="HAMAP-Rule" id="MF_00536"/>
    </source>
</evidence>